<keyword id="KW-0963">Cytoplasm</keyword>
<keyword id="KW-0378">Hydrolase</keyword>
<keyword id="KW-0460">Magnesium</keyword>
<keyword id="KW-0479">Metal-binding</keyword>
<sequence length="169" mass="20066">MTERQVECVLIEIPQGSRNKYEYDKERKVIRFDRMLFSSIVYPCDYGFFPDTLALDGDPLDAMVLMWEPTFPGCVIDVHPVAMLDMEDDKGRDEKILCVPQRDPLWNYIKTIEQVPPHLLKEITHFFETYKNLERKDVVVYGWRDLETARKVIQEAKDRYTEQKKLSNQ</sequence>
<gene>
    <name evidence="1" type="primary">ppa</name>
    <name type="ordered locus">MM_1441</name>
</gene>
<organism>
    <name type="scientific">Methanosarcina mazei (strain ATCC BAA-159 / DSM 3647 / Goe1 / Go1 / JCM 11833 / OCM 88)</name>
    <name type="common">Methanosarcina frisia</name>
    <dbReference type="NCBI Taxonomy" id="192952"/>
    <lineage>
        <taxon>Archaea</taxon>
        <taxon>Methanobacteriati</taxon>
        <taxon>Methanobacteriota</taxon>
        <taxon>Stenosarchaea group</taxon>
        <taxon>Methanomicrobia</taxon>
        <taxon>Methanosarcinales</taxon>
        <taxon>Methanosarcinaceae</taxon>
        <taxon>Methanosarcina</taxon>
    </lineage>
</organism>
<reference key="1">
    <citation type="submission" date="2000-10" db="EMBL/GenBank/DDBJ databases">
        <title>Identification and analysis of proton-translocating pyrophosphatases in the methanogenic archaeon Methanosarcina mazei.</title>
        <authorList>
            <person name="Baeumer S."/>
            <person name="Lentes S."/>
            <person name="Gottschalk G."/>
            <person name="Deppenmeier U."/>
        </authorList>
    </citation>
    <scope>NUCLEOTIDE SEQUENCE [GENOMIC DNA]</scope>
    <source>
        <strain>ATCC BAA-159 / DSM 3647 / Goe1 / Go1 / JCM 11833 / OCM 88</strain>
    </source>
</reference>
<reference key="2">
    <citation type="journal article" date="2002" name="J. Mol. Microbiol. Biotechnol.">
        <title>The genome of Methanosarcina mazei: evidence for lateral gene transfer between Bacteria and Archaea.</title>
        <authorList>
            <person name="Deppenmeier U."/>
            <person name="Johann A."/>
            <person name="Hartsch T."/>
            <person name="Merkl R."/>
            <person name="Schmitz R.A."/>
            <person name="Martinez-Arias R."/>
            <person name="Henne A."/>
            <person name="Wiezer A."/>
            <person name="Baeumer S."/>
            <person name="Jacobi C."/>
            <person name="Brueggemann H."/>
            <person name="Lienard T."/>
            <person name="Christmann A."/>
            <person name="Boemecke M."/>
            <person name="Steckel S."/>
            <person name="Bhattacharyya A."/>
            <person name="Lykidis A."/>
            <person name="Overbeek R."/>
            <person name="Klenk H.-P."/>
            <person name="Gunsalus R.P."/>
            <person name="Fritz H.-J."/>
            <person name="Gottschalk G."/>
        </authorList>
    </citation>
    <scope>NUCLEOTIDE SEQUENCE [LARGE SCALE GENOMIC DNA]</scope>
    <source>
        <strain>ATCC BAA-159 / DSM 3647 / Goe1 / Go1 / JCM 11833 / OCM 88</strain>
    </source>
</reference>
<evidence type="ECO:0000255" key="1">
    <source>
        <dbReference type="HAMAP-Rule" id="MF_00209"/>
    </source>
</evidence>
<evidence type="ECO:0000305" key="2"/>
<name>IPYR_METMA</name>
<protein>
    <recommendedName>
        <fullName evidence="1">Inorganic pyrophosphatase</fullName>
        <ecNumber evidence="1">3.6.1.1</ecNumber>
    </recommendedName>
    <alternativeName>
        <fullName evidence="1">Pyrophosphate phospho-hydrolase</fullName>
        <shortName evidence="1">PPase</shortName>
    </alternativeName>
</protein>
<accession>Q8PWY5</accession>
<accession>Q8NKW6</accession>
<dbReference type="EC" id="3.6.1.1" evidence="1"/>
<dbReference type="EMBL" id="AF312700">
    <property type="protein sequence ID" value="AAM22541.1"/>
    <property type="molecule type" value="Genomic_DNA"/>
</dbReference>
<dbReference type="EMBL" id="AE008384">
    <property type="protein sequence ID" value="AAM31137.1"/>
    <property type="status" value="ALT_INIT"/>
    <property type="molecule type" value="Genomic_DNA"/>
</dbReference>
<dbReference type="RefSeq" id="WP_011033387.1">
    <property type="nucleotide sequence ID" value="NC_003901.1"/>
</dbReference>
<dbReference type="SMR" id="Q8PWY5"/>
<dbReference type="KEGG" id="mma:MM_1441"/>
<dbReference type="PATRIC" id="fig|192952.21.peg.1667"/>
<dbReference type="eggNOG" id="arCOG01711">
    <property type="taxonomic scope" value="Archaea"/>
</dbReference>
<dbReference type="HOGENOM" id="CLU_073198_1_2_2"/>
<dbReference type="Proteomes" id="UP000000595">
    <property type="component" value="Chromosome"/>
</dbReference>
<dbReference type="GO" id="GO:0005737">
    <property type="term" value="C:cytoplasm"/>
    <property type="evidence" value="ECO:0007669"/>
    <property type="project" value="UniProtKB-SubCell"/>
</dbReference>
<dbReference type="GO" id="GO:0004427">
    <property type="term" value="F:inorganic diphosphate phosphatase activity"/>
    <property type="evidence" value="ECO:0007669"/>
    <property type="project" value="UniProtKB-UniRule"/>
</dbReference>
<dbReference type="GO" id="GO:0000287">
    <property type="term" value="F:magnesium ion binding"/>
    <property type="evidence" value="ECO:0007669"/>
    <property type="project" value="UniProtKB-UniRule"/>
</dbReference>
<dbReference type="GO" id="GO:0006796">
    <property type="term" value="P:phosphate-containing compound metabolic process"/>
    <property type="evidence" value="ECO:0007669"/>
    <property type="project" value="InterPro"/>
</dbReference>
<dbReference type="CDD" id="cd00412">
    <property type="entry name" value="pyrophosphatase"/>
    <property type="match status" value="1"/>
</dbReference>
<dbReference type="FunFam" id="3.90.80.10:FF:000003">
    <property type="entry name" value="Inorganic pyrophosphatase"/>
    <property type="match status" value="1"/>
</dbReference>
<dbReference type="Gene3D" id="3.90.80.10">
    <property type="entry name" value="Inorganic pyrophosphatase"/>
    <property type="match status" value="1"/>
</dbReference>
<dbReference type="HAMAP" id="MF_00209">
    <property type="entry name" value="Inorganic_PPase"/>
    <property type="match status" value="1"/>
</dbReference>
<dbReference type="InterPro" id="IPR008162">
    <property type="entry name" value="Pyrophosphatase"/>
</dbReference>
<dbReference type="InterPro" id="IPR036649">
    <property type="entry name" value="Pyrophosphatase_sf"/>
</dbReference>
<dbReference type="PANTHER" id="PTHR10286">
    <property type="entry name" value="INORGANIC PYROPHOSPHATASE"/>
    <property type="match status" value="1"/>
</dbReference>
<dbReference type="Pfam" id="PF00719">
    <property type="entry name" value="Pyrophosphatase"/>
    <property type="match status" value="1"/>
</dbReference>
<dbReference type="SUPFAM" id="SSF50324">
    <property type="entry name" value="Inorganic pyrophosphatase"/>
    <property type="match status" value="1"/>
</dbReference>
<dbReference type="PROSITE" id="PS00387">
    <property type="entry name" value="PPASE"/>
    <property type="match status" value="1"/>
</dbReference>
<feature type="chain" id="PRO_0000137551" description="Inorganic pyrophosphatase">
    <location>
        <begin position="1"/>
        <end position="169"/>
    </location>
</feature>
<feature type="binding site" evidence="1">
    <location>
        <position position="20"/>
    </location>
    <ligand>
        <name>substrate</name>
    </ligand>
</feature>
<feature type="binding site" evidence="1">
    <location>
        <position position="34"/>
    </location>
    <ligand>
        <name>substrate</name>
    </ligand>
</feature>
<feature type="binding site" evidence="1">
    <location>
        <position position="46"/>
    </location>
    <ligand>
        <name>substrate</name>
    </ligand>
</feature>
<feature type="binding site" evidence="1">
    <location>
        <position position="56"/>
    </location>
    <ligand>
        <name>Mg(2+)</name>
        <dbReference type="ChEBI" id="CHEBI:18420"/>
        <label>1</label>
    </ligand>
</feature>
<feature type="binding site" evidence="1">
    <location>
        <position position="61"/>
    </location>
    <ligand>
        <name>Mg(2+)</name>
        <dbReference type="ChEBI" id="CHEBI:18420"/>
        <label>1</label>
    </ligand>
</feature>
<feature type="binding site" evidence="1">
    <location>
        <position position="61"/>
    </location>
    <ligand>
        <name>Mg(2+)</name>
        <dbReference type="ChEBI" id="CHEBI:18420"/>
        <label>2</label>
    </ligand>
</feature>
<feature type="binding site" evidence="1">
    <location>
        <position position="93"/>
    </location>
    <ligand>
        <name>Mg(2+)</name>
        <dbReference type="ChEBI" id="CHEBI:18420"/>
        <label>1</label>
    </ligand>
</feature>
<feature type="binding site" evidence="1">
    <location>
        <position position="130"/>
    </location>
    <ligand>
        <name>substrate</name>
    </ligand>
</feature>
<proteinExistence type="inferred from homology"/>
<comment type="function">
    <text evidence="1">Catalyzes the hydrolysis of inorganic pyrophosphate (PPi) forming two phosphate ions.</text>
</comment>
<comment type="catalytic activity">
    <reaction evidence="1">
        <text>diphosphate + H2O = 2 phosphate + H(+)</text>
        <dbReference type="Rhea" id="RHEA:24576"/>
        <dbReference type="ChEBI" id="CHEBI:15377"/>
        <dbReference type="ChEBI" id="CHEBI:15378"/>
        <dbReference type="ChEBI" id="CHEBI:33019"/>
        <dbReference type="ChEBI" id="CHEBI:43474"/>
        <dbReference type="EC" id="3.6.1.1"/>
    </reaction>
</comment>
<comment type="cofactor">
    <cofactor evidence="1">
        <name>Mg(2+)</name>
        <dbReference type="ChEBI" id="CHEBI:18420"/>
    </cofactor>
</comment>
<comment type="subunit">
    <text evidence="1">Homohexamer.</text>
</comment>
<comment type="subcellular location">
    <subcellularLocation>
        <location evidence="1">Cytoplasm</location>
    </subcellularLocation>
</comment>
<comment type="similarity">
    <text evidence="1">Belongs to the PPase family.</text>
</comment>
<comment type="sequence caution" evidence="2">
    <conflict type="erroneous initiation">
        <sequence resource="EMBL-CDS" id="AAM31137"/>
    </conflict>
</comment>